<feature type="chain" id="PRO_0000353322" description="DNA-directed RNA polymerase subunit beta'">
    <location>
        <begin position="1"/>
        <end position="1494"/>
    </location>
</feature>
<feature type="binding site" evidence="1">
    <location>
        <position position="67"/>
    </location>
    <ligand>
        <name>Zn(2+)</name>
        <dbReference type="ChEBI" id="CHEBI:29105"/>
        <label>1</label>
    </ligand>
</feature>
<feature type="binding site" evidence="1">
    <location>
        <position position="69"/>
    </location>
    <ligand>
        <name>Zn(2+)</name>
        <dbReference type="ChEBI" id="CHEBI:29105"/>
        <label>1</label>
    </ligand>
</feature>
<feature type="binding site" evidence="1">
    <location>
        <position position="82"/>
    </location>
    <ligand>
        <name>Zn(2+)</name>
        <dbReference type="ChEBI" id="CHEBI:29105"/>
        <label>1</label>
    </ligand>
</feature>
<feature type="binding site" evidence="1">
    <location>
        <position position="85"/>
    </location>
    <ligand>
        <name>Zn(2+)</name>
        <dbReference type="ChEBI" id="CHEBI:29105"/>
        <label>1</label>
    </ligand>
</feature>
<feature type="binding site" evidence="1">
    <location>
        <position position="499"/>
    </location>
    <ligand>
        <name>Mg(2+)</name>
        <dbReference type="ChEBI" id="CHEBI:18420"/>
    </ligand>
</feature>
<feature type="binding site" evidence="1">
    <location>
        <position position="501"/>
    </location>
    <ligand>
        <name>Mg(2+)</name>
        <dbReference type="ChEBI" id="CHEBI:18420"/>
    </ligand>
</feature>
<feature type="binding site" evidence="1">
    <location>
        <position position="503"/>
    </location>
    <ligand>
        <name>Mg(2+)</name>
        <dbReference type="ChEBI" id="CHEBI:18420"/>
    </ligand>
</feature>
<feature type="binding site" evidence="1">
    <location>
        <position position="868"/>
    </location>
    <ligand>
        <name>Zn(2+)</name>
        <dbReference type="ChEBI" id="CHEBI:29105"/>
        <label>2</label>
    </ligand>
</feature>
<feature type="binding site" evidence="1">
    <location>
        <position position="944"/>
    </location>
    <ligand>
        <name>Zn(2+)</name>
        <dbReference type="ChEBI" id="CHEBI:29105"/>
        <label>2</label>
    </ligand>
</feature>
<feature type="binding site" evidence="1">
    <location>
        <position position="951"/>
    </location>
    <ligand>
        <name>Zn(2+)</name>
        <dbReference type="ChEBI" id="CHEBI:29105"/>
        <label>2</label>
    </ligand>
</feature>
<feature type="binding site" evidence="1">
    <location>
        <position position="954"/>
    </location>
    <ligand>
        <name>Zn(2+)</name>
        <dbReference type="ChEBI" id="CHEBI:29105"/>
        <label>2</label>
    </ligand>
</feature>
<protein>
    <recommendedName>
        <fullName evidence="1">DNA-directed RNA polymerase subunit beta'</fullName>
        <shortName evidence="1">RNAP subunit beta'</shortName>
        <ecNumber evidence="1">2.7.7.6</ecNumber>
    </recommendedName>
    <alternativeName>
        <fullName evidence="1">RNA polymerase subunit beta'</fullName>
    </alternativeName>
    <alternativeName>
        <fullName evidence="1">Transcriptase subunit beta'</fullName>
    </alternativeName>
</protein>
<gene>
    <name evidence="1" type="primary">rpoC</name>
    <name type="ordered locus">Cpar_1882</name>
</gene>
<comment type="function">
    <text evidence="1">DNA-dependent RNA polymerase catalyzes the transcription of DNA into RNA using the four ribonucleoside triphosphates as substrates.</text>
</comment>
<comment type="catalytic activity">
    <reaction evidence="1">
        <text>RNA(n) + a ribonucleoside 5'-triphosphate = RNA(n+1) + diphosphate</text>
        <dbReference type="Rhea" id="RHEA:21248"/>
        <dbReference type="Rhea" id="RHEA-COMP:14527"/>
        <dbReference type="Rhea" id="RHEA-COMP:17342"/>
        <dbReference type="ChEBI" id="CHEBI:33019"/>
        <dbReference type="ChEBI" id="CHEBI:61557"/>
        <dbReference type="ChEBI" id="CHEBI:140395"/>
        <dbReference type="EC" id="2.7.7.6"/>
    </reaction>
</comment>
<comment type="cofactor">
    <cofactor evidence="1">
        <name>Mg(2+)</name>
        <dbReference type="ChEBI" id="CHEBI:18420"/>
    </cofactor>
    <text evidence="1">Binds 1 Mg(2+) ion per subunit.</text>
</comment>
<comment type="cofactor">
    <cofactor evidence="1">
        <name>Zn(2+)</name>
        <dbReference type="ChEBI" id="CHEBI:29105"/>
    </cofactor>
    <text evidence="1">Binds 2 Zn(2+) ions per subunit.</text>
</comment>
<comment type="subunit">
    <text evidence="1">The RNAP catalytic core consists of 2 alpha, 1 beta, 1 beta' and 1 omega subunit. When a sigma factor is associated with the core the holoenzyme is formed, which can initiate transcription.</text>
</comment>
<comment type="similarity">
    <text evidence="1">Belongs to the RNA polymerase beta' chain family.</text>
</comment>
<dbReference type="EC" id="2.7.7.6" evidence="1"/>
<dbReference type="EMBL" id="CP001099">
    <property type="protein sequence ID" value="ACF12274.1"/>
    <property type="molecule type" value="Genomic_DNA"/>
</dbReference>
<dbReference type="RefSeq" id="WP_012503107.1">
    <property type="nucleotide sequence ID" value="NC_011027.1"/>
</dbReference>
<dbReference type="SMR" id="B3QQS1"/>
<dbReference type="STRING" id="517417.Cpar_1882"/>
<dbReference type="KEGG" id="cpc:Cpar_1882"/>
<dbReference type="eggNOG" id="COG0086">
    <property type="taxonomic scope" value="Bacteria"/>
</dbReference>
<dbReference type="HOGENOM" id="CLU_000524_3_1_10"/>
<dbReference type="OrthoDB" id="9815296at2"/>
<dbReference type="Proteomes" id="UP000008811">
    <property type="component" value="Chromosome"/>
</dbReference>
<dbReference type="GO" id="GO:0000428">
    <property type="term" value="C:DNA-directed RNA polymerase complex"/>
    <property type="evidence" value="ECO:0007669"/>
    <property type="project" value="UniProtKB-KW"/>
</dbReference>
<dbReference type="GO" id="GO:0003677">
    <property type="term" value="F:DNA binding"/>
    <property type="evidence" value="ECO:0007669"/>
    <property type="project" value="UniProtKB-UniRule"/>
</dbReference>
<dbReference type="GO" id="GO:0003899">
    <property type="term" value="F:DNA-directed RNA polymerase activity"/>
    <property type="evidence" value="ECO:0007669"/>
    <property type="project" value="UniProtKB-UniRule"/>
</dbReference>
<dbReference type="GO" id="GO:0000287">
    <property type="term" value="F:magnesium ion binding"/>
    <property type="evidence" value="ECO:0007669"/>
    <property type="project" value="UniProtKB-UniRule"/>
</dbReference>
<dbReference type="GO" id="GO:0008270">
    <property type="term" value="F:zinc ion binding"/>
    <property type="evidence" value="ECO:0007669"/>
    <property type="project" value="UniProtKB-UniRule"/>
</dbReference>
<dbReference type="GO" id="GO:0006351">
    <property type="term" value="P:DNA-templated transcription"/>
    <property type="evidence" value="ECO:0007669"/>
    <property type="project" value="UniProtKB-UniRule"/>
</dbReference>
<dbReference type="CDD" id="cd02655">
    <property type="entry name" value="RNAP_beta'_C"/>
    <property type="match status" value="1"/>
</dbReference>
<dbReference type="CDD" id="cd01609">
    <property type="entry name" value="RNAP_beta'_N"/>
    <property type="match status" value="1"/>
</dbReference>
<dbReference type="FunFam" id="1.10.150.390:FF:000002">
    <property type="entry name" value="DNA-directed RNA polymerase subunit beta"/>
    <property type="match status" value="1"/>
</dbReference>
<dbReference type="Gene3D" id="1.10.132.30">
    <property type="match status" value="1"/>
</dbReference>
<dbReference type="Gene3D" id="1.10.150.390">
    <property type="match status" value="1"/>
</dbReference>
<dbReference type="Gene3D" id="1.10.1790.20">
    <property type="match status" value="1"/>
</dbReference>
<dbReference type="Gene3D" id="1.10.40.90">
    <property type="match status" value="1"/>
</dbReference>
<dbReference type="Gene3D" id="2.40.40.20">
    <property type="match status" value="1"/>
</dbReference>
<dbReference type="Gene3D" id="2.40.50.100">
    <property type="match status" value="3"/>
</dbReference>
<dbReference type="Gene3D" id="4.10.860.120">
    <property type="entry name" value="RNA polymerase II, clamp domain"/>
    <property type="match status" value="1"/>
</dbReference>
<dbReference type="Gene3D" id="1.10.274.100">
    <property type="entry name" value="RNA polymerase Rpb1, domain 3"/>
    <property type="match status" value="1"/>
</dbReference>
<dbReference type="HAMAP" id="MF_01322">
    <property type="entry name" value="RNApol_bact_RpoC"/>
    <property type="match status" value="1"/>
</dbReference>
<dbReference type="InterPro" id="IPR045867">
    <property type="entry name" value="DNA-dir_RpoC_beta_prime"/>
</dbReference>
<dbReference type="InterPro" id="IPR012754">
    <property type="entry name" value="DNA-dir_RpoC_beta_prime_bact"/>
</dbReference>
<dbReference type="InterPro" id="IPR000722">
    <property type="entry name" value="RNA_pol_asu"/>
</dbReference>
<dbReference type="InterPro" id="IPR006592">
    <property type="entry name" value="RNA_pol_N"/>
</dbReference>
<dbReference type="InterPro" id="IPR007080">
    <property type="entry name" value="RNA_pol_Rpb1_1"/>
</dbReference>
<dbReference type="InterPro" id="IPR007066">
    <property type="entry name" value="RNA_pol_Rpb1_3"/>
</dbReference>
<dbReference type="InterPro" id="IPR042102">
    <property type="entry name" value="RNA_pol_Rpb1_3_sf"/>
</dbReference>
<dbReference type="InterPro" id="IPR007083">
    <property type="entry name" value="RNA_pol_Rpb1_4"/>
</dbReference>
<dbReference type="InterPro" id="IPR007081">
    <property type="entry name" value="RNA_pol_Rpb1_5"/>
</dbReference>
<dbReference type="InterPro" id="IPR044893">
    <property type="entry name" value="RNA_pol_Rpb1_clamp_domain"/>
</dbReference>
<dbReference type="InterPro" id="IPR038120">
    <property type="entry name" value="Rpb1_funnel_sf"/>
</dbReference>
<dbReference type="NCBIfam" id="TIGR02386">
    <property type="entry name" value="rpoC_TIGR"/>
    <property type="match status" value="1"/>
</dbReference>
<dbReference type="PANTHER" id="PTHR19376">
    <property type="entry name" value="DNA-DIRECTED RNA POLYMERASE"/>
    <property type="match status" value="1"/>
</dbReference>
<dbReference type="PANTHER" id="PTHR19376:SF54">
    <property type="entry name" value="DNA-DIRECTED RNA POLYMERASE SUBUNIT BETA"/>
    <property type="match status" value="1"/>
</dbReference>
<dbReference type="Pfam" id="PF04997">
    <property type="entry name" value="RNA_pol_Rpb1_1"/>
    <property type="match status" value="1"/>
</dbReference>
<dbReference type="Pfam" id="PF00623">
    <property type="entry name" value="RNA_pol_Rpb1_2"/>
    <property type="match status" value="1"/>
</dbReference>
<dbReference type="Pfam" id="PF04983">
    <property type="entry name" value="RNA_pol_Rpb1_3"/>
    <property type="match status" value="1"/>
</dbReference>
<dbReference type="Pfam" id="PF05000">
    <property type="entry name" value="RNA_pol_Rpb1_4"/>
    <property type="match status" value="1"/>
</dbReference>
<dbReference type="Pfam" id="PF04998">
    <property type="entry name" value="RNA_pol_Rpb1_5"/>
    <property type="match status" value="1"/>
</dbReference>
<dbReference type="SMART" id="SM00663">
    <property type="entry name" value="RPOLA_N"/>
    <property type="match status" value="1"/>
</dbReference>
<dbReference type="SUPFAM" id="SSF64484">
    <property type="entry name" value="beta and beta-prime subunits of DNA dependent RNA-polymerase"/>
    <property type="match status" value="1"/>
</dbReference>
<evidence type="ECO:0000255" key="1">
    <source>
        <dbReference type="HAMAP-Rule" id="MF_01322"/>
    </source>
</evidence>
<sequence length="1494" mass="166471">MIFSQGSSPIKGDFSKIKFSIASPESILAHSRGEVLKPETINYRTFKPERDGLMCEKIFGPTKDWECYCGKYKRVRYKGIICDRCGVEVTTKNVRRERMGHISLAVPVVHTWFFRSVPSKIGALLDLSTKELERIIYYEVYVVINPGEPGEKQGIKKFDRLTEEQYFQIITEYEDNQDLEDNDPAKFVAKMGGEAIHTLLKGLNLDEIAVNLRKVLKESGSEQKRADALKRLKVVESFRKSYEPQKRTRKKSTGLFPEEDSPELYIYEGNKPEYMVMEVVPVIPPELRPLVPLEGGRFATSDLNDLYRRVIIRNNRLKKLIDIRAPEVILRNEKRMLQEAVDALFDNSRKANAVKTGESNRPLKSLSDALKGKQGRFRQNLLGKRVDYSGRSVIVVGPELQLHQCGLPKSMAIELFQPFVIRRLVERGIAKSVKSAKKLIDKKDPVVWDVLEKVIDGRPVLLNRAPTLHRLGIQAFQPTLIEGKAIQLHPLVCTAFNADFDGDQMAVHVPLSQEAQLEASLLMLSSHNLILPQSGKPVTVPSQDMVLGMYYLTKARFGDVGQGQLFYSMEEVIIAYNEERAGLHAQIFVKYDGKVDQVSDPVRLVDTLVPEEQAERRAWLKSQIEQKKVLVTTVGRVIFNQHMPEKIGFINKLINKKVAKELIAHLSSQVGNVETAQFLDNIKAVGFGYAMRGGLSIGLSDAIVPETKVKHIKNAQRDSAKVVKEYNRGTLTDNERYNQIVDVWQKTSNLVADESYQKLKNDRDGFNPLYMMLDSGARGSREQVRQLTGMRGLIARPQKSMSGQPGEIIENPIISNLKEGLTVLEYFISTHGARKGLSDTSLKTADAGYLTRRLHDVAQDVIVTIDDCGTTRGLHVERNIEEETSGQIKFREKIKGRVAARDIVDVINDKVVVKAGEIITDELAAAIQDNIGVEEAEIRSVLTCESKVGICSKCYGTNLSVHKLVEMGEAVGVIAAQSIGEPGTQLTLRTFHQGGAAQGGISETETKAFYEGQVELEDVKSVEHSIITEDGIEETRQIVIQKNGKLNIIDPDSGKVLKRYVVPHGAHINVENGQMVRKDQVLFSSEPNSTQILAEMPGFAKFIDIEKGVTYKEEVDPQTGFAQHTIINWRSKLRASETREPRIAIVSESGEIKKTYPVPIKSNLYVEDGQKLNPGDTIAKVPRNLDRVGGDITAGLPKVTELFEARIPTDPAIVSEIDGYVSFGSQRRSSKEIKVKNDFGEEKTYYVQVGKHVLATEGDEVKAGDPLTDGAVSPQDILRIQGPNAVQQYLVNEIQKVYQINAGVEINDKHLEVIVRQMLQKVRVEEAGDTNLLPGDLIDRGTFIEANEAVAEKVRVIDRGDAPPRIQEGQLYKQRDITKLNRELRRNSKSLITIEPALQATSHPVLLGITSAALQTESVISAASFQETTKVLTDAAVAGKVDHLAGLKENVIVGKLIPAGTGLRKYRSIRLQSNEPEEVDVIESASTGDAEEEN</sequence>
<reference key="1">
    <citation type="submission" date="2008-06" db="EMBL/GenBank/DDBJ databases">
        <title>Complete sequence of Chlorobaculum parvum NCIB 8327.</title>
        <authorList>
            <consortium name="US DOE Joint Genome Institute"/>
            <person name="Lucas S."/>
            <person name="Copeland A."/>
            <person name="Lapidus A."/>
            <person name="Glavina del Rio T."/>
            <person name="Dalin E."/>
            <person name="Tice H."/>
            <person name="Bruce D."/>
            <person name="Goodwin L."/>
            <person name="Pitluck S."/>
            <person name="Schmutz J."/>
            <person name="Larimer F."/>
            <person name="Land M."/>
            <person name="Hauser L."/>
            <person name="Kyrpides N."/>
            <person name="Mikhailova N."/>
            <person name="Zhao F."/>
            <person name="Li T."/>
            <person name="Liu Z."/>
            <person name="Overmann J."/>
            <person name="Bryant D.A."/>
            <person name="Richardson P."/>
        </authorList>
    </citation>
    <scope>NUCLEOTIDE SEQUENCE [LARGE SCALE GENOMIC DNA]</scope>
    <source>
        <strain>DSM 263 / NCIMB 8327</strain>
    </source>
</reference>
<keyword id="KW-0240">DNA-directed RNA polymerase</keyword>
<keyword id="KW-0460">Magnesium</keyword>
<keyword id="KW-0479">Metal-binding</keyword>
<keyword id="KW-0548">Nucleotidyltransferase</keyword>
<keyword id="KW-0804">Transcription</keyword>
<keyword id="KW-0808">Transferase</keyword>
<keyword id="KW-0862">Zinc</keyword>
<accession>B3QQS1</accession>
<proteinExistence type="inferred from homology"/>
<name>RPOC_CHLP8</name>
<organism>
    <name type="scientific">Chlorobaculum parvum (strain DSM 263 / NCIMB 8327)</name>
    <name type="common">Chlorobium vibrioforme subsp. thiosulfatophilum</name>
    <dbReference type="NCBI Taxonomy" id="517417"/>
    <lineage>
        <taxon>Bacteria</taxon>
        <taxon>Pseudomonadati</taxon>
        <taxon>Chlorobiota</taxon>
        <taxon>Chlorobiia</taxon>
        <taxon>Chlorobiales</taxon>
        <taxon>Chlorobiaceae</taxon>
        <taxon>Chlorobaculum</taxon>
    </lineage>
</organism>